<organism>
    <name type="scientific">Halorhodospira halophila (strain DSM 244 / SL1)</name>
    <name type="common">Ectothiorhodospira halophila (strain DSM 244 / SL1)</name>
    <dbReference type="NCBI Taxonomy" id="349124"/>
    <lineage>
        <taxon>Bacteria</taxon>
        <taxon>Pseudomonadati</taxon>
        <taxon>Pseudomonadota</taxon>
        <taxon>Gammaproteobacteria</taxon>
        <taxon>Chromatiales</taxon>
        <taxon>Ectothiorhodospiraceae</taxon>
        <taxon>Halorhodospira</taxon>
    </lineage>
</organism>
<dbReference type="EC" id="3.1.26.4" evidence="1"/>
<dbReference type="EMBL" id="CP000544">
    <property type="protein sequence ID" value="ABM62349.1"/>
    <property type="molecule type" value="Genomic_DNA"/>
</dbReference>
<dbReference type="RefSeq" id="WP_011814371.1">
    <property type="nucleotide sequence ID" value="NC_008789.1"/>
</dbReference>
<dbReference type="SMR" id="A1WXD7"/>
<dbReference type="STRING" id="349124.Hhal_1585"/>
<dbReference type="KEGG" id="hha:Hhal_1585"/>
<dbReference type="eggNOG" id="COG0328">
    <property type="taxonomic scope" value="Bacteria"/>
</dbReference>
<dbReference type="HOGENOM" id="CLU_030894_6_0_6"/>
<dbReference type="OrthoDB" id="7845843at2"/>
<dbReference type="Proteomes" id="UP000000647">
    <property type="component" value="Chromosome"/>
</dbReference>
<dbReference type="GO" id="GO:0005737">
    <property type="term" value="C:cytoplasm"/>
    <property type="evidence" value="ECO:0007669"/>
    <property type="project" value="UniProtKB-SubCell"/>
</dbReference>
<dbReference type="GO" id="GO:0000287">
    <property type="term" value="F:magnesium ion binding"/>
    <property type="evidence" value="ECO:0007669"/>
    <property type="project" value="UniProtKB-UniRule"/>
</dbReference>
<dbReference type="GO" id="GO:0003676">
    <property type="term" value="F:nucleic acid binding"/>
    <property type="evidence" value="ECO:0007669"/>
    <property type="project" value="InterPro"/>
</dbReference>
<dbReference type="GO" id="GO:0004523">
    <property type="term" value="F:RNA-DNA hybrid ribonuclease activity"/>
    <property type="evidence" value="ECO:0007669"/>
    <property type="project" value="UniProtKB-UniRule"/>
</dbReference>
<dbReference type="GO" id="GO:0043137">
    <property type="term" value="P:DNA replication, removal of RNA primer"/>
    <property type="evidence" value="ECO:0007669"/>
    <property type="project" value="TreeGrafter"/>
</dbReference>
<dbReference type="CDD" id="cd09278">
    <property type="entry name" value="RNase_HI_prokaryote_like"/>
    <property type="match status" value="1"/>
</dbReference>
<dbReference type="FunFam" id="3.30.420.10:FF:000089">
    <property type="entry name" value="Ribonuclease H"/>
    <property type="match status" value="1"/>
</dbReference>
<dbReference type="Gene3D" id="3.30.420.10">
    <property type="entry name" value="Ribonuclease H-like superfamily/Ribonuclease H"/>
    <property type="match status" value="1"/>
</dbReference>
<dbReference type="HAMAP" id="MF_00042">
    <property type="entry name" value="RNase_H"/>
    <property type="match status" value="1"/>
</dbReference>
<dbReference type="InterPro" id="IPR050092">
    <property type="entry name" value="RNase_H"/>
</dbReference>
<dbReference type="InterPro" id="IPR012337">
    <property type="entry name" value="RNaseH-like_sf"/>
</dbReference>
<dbReference type="InterPro" id="IPR002156">
    <property type="entry name" value="RNaseH_domain"/>
</dbReference>
<dbReference type="InterPro" id="IPR036397">
    <property type="entry name" value="RNaseH_sf"/>
</dbReference>
<dbReference type="InterPro" id="IPR022892">
    <property type="entry name" value="RNaseHI"/>
</dbReference>
<dbReference type="NCBIfam" id="NF001236">
    <property type="entry name" value="PRK00203.1"/>
    <property type="match status" value="1"/>
</dbReference>
<dbReference type="PANTHER" id="PTHR10642">
    <property type="entry name" value="RIBONUCLEASE H1"/>
    <property type="match status" value="1"/>
</dbReference>
<dbReference type="PANTHER" id="PTHR10642:SF26">
    <property type="entry name" value="RIBONUCLEASE H1"/>
    <property type="match status" value="1"/>
</dbReference>
<dbReference type="Pfam" id="PF00075">
    <property type="entry name" value="RNase_H"/>
    <property type="match status" value="1"/>
</dbReference>
<dbReference type="SUPFAM" id="SSF53098">
    <property type="entry name" value="Ribonuclease H-like"/>
    <property type="match status" value="1"/>
</dbReference>
<dbReference type="PROSITE" id="PS50879">
    <property type="entry name" value="RNASE_H_1"/>
    <property type="match status" value="1"/>
</dbReference>
<feature type="chain" id="PRO_0000332611" description="Ribonuclease H">
    <location>
        <begin position="1"/>
        <end position="149"/>
    </location>
</feature>
<feature type="domain" description="RNase H type-1" evidence="2">
    <location>
        <begin position="4"/>
        <end position="145"/>
    </location>
</feature>
<feature type="binding site" evidence="1">
    <location>
        <position position="13"/>
    </location>
    <ligand>
        <name>Mg(2+)</name>
        <dbReference type="ChEBI" id="CHEBI:18420"/>
        <label>1</label>
    </ligand>
</feature>
<feature type="binding site" evidence="1">
    <location>
        <position position="13"/>
    </location>
    <ligand>
        <name>Mg(2+)</name>
        <dbReference type="ChEBI" id="CHEBI:18420"/>
        <label>2</label>
    </ligand>
</feature>
<feature type="binding site" evidence="1">
    <location>
        <position position="51"/>
    </location>
    <ligand>
        <name>Mg(2+)</name>
        <dbReference type="ChEBI" id="CHEBI:18420"/>
        <label>1</label>
    </ligand>
</feature>
<feature type="binding site" evidence="1">
    <location>
        <position position="73"/>
    </location>
    <ligand>
        <name>Mg(2+)</name>
        <dbReference type="ChEBI" id="CHEBI:18420"/>
        <label>1</label>
    </ligand>
</feature>
<feature type="binding site" evidence="1">
    <location>
        <position position="137"/>
    </location>
    <ligand>
        <name>Mg(2+)</name>
        <dbReference type="ChEBI" id="CHEBI:18420"/>
        <label>2</label>
    </ligand>
</feature>
<proteinExistence type="inferred from homology"/>
<name>RNH_HALHL</name>
<protein>
    <recommendedName>
        <fullName evidence="1">Ribonuclease H</fullName>
        <shortName evidence="1">RNase H</shortName>
        <ecNumber evidence="1">3.1.26.4</ecNumber>
    </recommendedName>
</protein>
<gene>
    <name evidence="1" type="primary">rnhA</name>
    <name type="ordered locus">Hhal_1585</name>
</gene>
<reference key="1">
    <citation type="submission" date="2006-12" db="EMBL/GenBank/DDBJ databases">
        <title>Complete sequence of Halorhodospira halophila SL1.</title>
        <authorList>
            <consortium name="US DOE Joint Genome Institute"/>
            <person name="Copeland A."/>
            <person name="Lucas S."/>
            <person name="Lapidus A."/>
            <person name="Barry K."/>
            <person name="Detter J.C."/>
            <person name="Glavina del Rio T."/>
            <person name="Hammon N."/>
            <person name="Israni S."/>
            <person name="Dalin E."/>
            <person name="Tice H."/>
            <person name="Pitluck S."/>
            <person name="Saunders E."/>
            <person name="Brettin T."/>
            <person name="Bruce D."/>
            <person name="Han C."/>
            <person name="Tapia R."/>
            <person name="Schmutz J."/>
            <person name="Larimer F."/>
            <person name="Land M."/>
            <person name="Hauser L."/>
            <person name="Kyrpides N."/>
            <person name="Mikhailova N."/>
            <person name="Hoff W."/>
            <person name="Richardson P."/>
        </authorList>
    </citation>
    <scope>NUCLEOTIDE SEQUENCE [LARGE SCALE GENOMIC DNA]</scope>
    <source>
        <strain>DSM 244 / SL1</strain>
    </source>
</reference>
<evidence type="ECO:0000255" key="1">
    <source>
        <dbReference type="HAMAP-Rule" id="MF_00042"/>
    </source>
</evidence>
<evidence type="ECO:0000255" key="2">
    <source>
        <dbReference type="PROSITE-ProRule" id="PRU00408"/>
    </source>
</evidence>
<comment type="function">
    <text evidence="1">Endonuclease that specifically degrades the RNA of RNA-DNA hybrids.</text>
</comment>
<comment type="catalytic activity">
    <reaction evidence="1">
        <text>Endonucleolytic cleavage to 5'-phosphomonoester.</text>
        <dbReference type="EC" id="3.1.26.4"/>
    </reaction>
</comment>
<comment type="cofactor">
    <cofactor evidence="1">
        <name>Mg(2+)</name>
        <dbReference type="ChEBI" id="CHEBI:18420"/>
    </cofactor>
    <text evidence="1">Binds 1 Mg(2+) ion per subunit. May bind a second metal ion at a regulatory site, or after substrate binding.</text>
</comment>
<comment type="subunit">
    <text evidence="1">Monomer.</text>
</comment>
<comment type="subcellular location">
    <subcellularLocation>
        <location evidence="1">Cytoplasm</location>
    </subcellularLocation>
</comment>
<comment type="similarity">
    <text evidence="1">Belongs to the RNase H family.</text>
</comment>
<keyword id="KW-0963">Cytoplasm</keyword>
<keyword id="KW-0255">Endonuclease</keyword>
<keyword id="KW-0378">Hydrolase</keyword>
<keyword id="KW-0460">Magnesium</keyword>
<keyword id="KW-0479">Metal-binding</keyword>
<keyword id="KW-0540">Nuclease</keyword>
<keyword id="KW-1185">Reference proteome</keyword>
<sequence>MTEQRGVVEAFTDGACRGNPGPGGWGVLLRYGEHERELYGGEPETTNNRMELTAAIRALEALDRPCRVVLTTDSQYVRRGITEWLEGWKRRGWRTASRKPVLNQDLWQRLDELAAYHQVDWHWVRGHAGHAENERADALANQGIDELVA</sequence>
<accession>A1WXD7</accession>